<comment type="catalytic activity">
    <reaction>
        <text>(2R)-3-phosphoglycerate + ATP = (2R)-3-phospho-glyceroyl phosphate + ADP</text>
        <dbReference type="Rhea" id="RHEA:14801"/>
        <dbReference type="ChEBI" id="CHEBI:30616"/>
        <dbReference type="ChEBI" id="CHEBI:57604"/>
        <dbReference type="ChEBI" id="CHEBI:58272"/>
        <dbReference type="ChEBI" id="CHEBI:456216"/>
        <dbReference type="EC" id="2.7.2.3"/>
    </reaction>
</comment>
<comment type="pathway">
    <text>Carbohydrate degradation; glycolysis; pyruvate from D-glyceraldehyde 3-phosphate: step 2/5.</text>
</comment>
<comment type="subunit">
    <text evidence="1">Monomer.</text>
</comment>
<comment type="subcellular location">
    <subcellularLocation>
        <location>Cytoplasm</location>
    </subcellularLocation>
</comment>
<comment type="similarity">
    <text evidence="3">Belongs to the phosphoglycerate kinase family.</text>
</comment>
<reference key="1">
    <citation type="journal article" date="1995" name="Science">
        <title>Whole-genome random sequencing and assembly of Haemophilus influenzae Rd.</title>
        <authorList>
            <person name="Fleischmann R.D."/>
            <person name="Adams M.D."/>
            <person name="White O."/>
            <person name="Clayton R.A."/>
            <person name="Kirkness E.F."/>
            <person name="Kerlavage A.R."/>
            <person name="Bult C.J."/>
            <person name="Tomb J.-F."/>
            <person name="Dougherty B.A."/>
            <person name="Merrick J.M."/>
            <person name="McKenney K."/>
            <person name="Sutton G.G."/>
            <person name="FitzHugh W."/>
            <person name="Fields C.A."/>
            <person name="Gocayne J.D."/>
            <person name="Scott J.D."/>
            <person name="Shirley R."/>
            <person name="Liu L.-I."/>
            <person name="Glodek A."/>
            <person name="Kelley J.M."/>
            <person name="Weidman J.F."/>
            <person name="Phillips C.A."/>
            <person name="Spriggs T."/>
            <person name="Hedblom E."/>
            <person name="Cotton M.D."/>
            <person name="Utterback T.R."/>
            <person name="Hanna M.C."/>
            <person name="Nguyen D.T."/>
            <person name="Saudek D.M."/>
            <person name="Brandon R.C."/>
            <person name="Fine L.D."/>
            <person name="Fritchman J.L."/>
            <person name="Fuhrmann J.L."/>
            <person name="Geoghagen N.S.M."/>
            <person name="Gnehm C.L."/>
            <person name="McDonald L.A."/>
            <person name="Small K.V."/>
            <person name="Fraser C.M."/>
            <person name="Smith H.O."/>
            <person name="Venter J.C."/>
        </authorList>
    </citation>
    <scope>NUCLEOTIDE SEQUENCE [LARGE SCALE GENOMIC DNA]</scope>
    <source>
        <strain>ATCC 51907 / DSM 11121 / KW20 / Rd</strain>
    </source>
</reference>
<reference key="2">
    <citation type="journal article" date="2000" name="Electrophoresis">
        <title>Two-dimensional map of the proteome of Haemophilus influenzae.</title>
        <authorList>
            <person name="Langen H."/>
            <person name="Takacs B."/>
            <person name="Evers S."/>
            <person name="Berndt P."/>
            <person name="Lahm H.W."/>
            <person name="Wipf B."/>
            <person name="Gray C."/>
            <person name="Fountoulakis M."/>
        </authorList>
    </citation>
    <scope>PROTEIN SEQUENCE OF 2-6</scope>
    <source>
        <strain>ATCC 51907 / DSM 11121 / KW20 / Rd</strain>
    </source>
</reference>
<name>PGK_HAEIN</name>
<feature type="initiator methionine" description="Removed" evidence="2">
    <location>
        <position position="1"/>
    </location>
</feature>
<feature type="chain" id="PRO_0000145948" description="Phosphoglycerate kinase">
    <location>
        <begin position="2"/>
        <end position="386"/>
    </location>
</feature>
<feature type="binding site" evidence="1">
    <location>
        <begin position="21"/>
        <end position="23"/>
    </location>
    <ligand>
        <name>substrate</name>
    </ligand>
</feature>
<feature type="binding site" evidence="1">
    <location>
        <position position="36"/>
    </location>
    <ligand>
        <name>substrate</name>
    </ligand>
</feature>
<feature type="binding site" evidence="1">
    <location>
        <begin position="59"/>
        <end position="62"/>
    </location>
    <ligand>
        <name>substrate</name>
    </ligand>
</feature>
<feature type="binding site" evidence="1">
    <location>
        <position position="112"/>
    </location>
    <ligand>
        <name>substrate</name>
    </ligand>
</feature>
<feature type="binding site" evidence="1">
    <location>
        <position position="145"/>
    </location>
    <ligand>
        <name>substrate</name>
    </ligand>
</feature>
<feature type="binding site" evidence="1">
    <location>
        <position position="196"/>
    </location>
    <ligand>
        <name>ATP</name>
        <dbReference type="ChEBI" id="CHEBI:30616"/>
    </ligand>
</feature>
<feature type="binding site" evidence="1">
    <location>
        <position position="313"/>
    </location>
    <ligand>
        <name>ATP</name>
        <dbReference type="ChEBI" id="CHEBI:30616"/>
    </ligand>
</feature>
<feature type="binding site" evidence="1">
    <location>
        <begin position="339"/>
        <end position="342"/>
    </location>
    <ligand>
        <name>ATP</name>
        <dbReference type="ChEBI" id="CHEBI:30616"/>
    </ligand>
</feature>
<gene>
    <name type="primary">pgk</name>
    <name type="ordered locus">HI_0525</name>
</gene>
<sequence>MSVIKMTDLDLAGKRVFIRADLNVPVKDGKVTSDARIRATIPTLKLALEKGAKVMVTSHLGRPTEGEFKPEDSLQPVVDYLKNAGFNVRLEQDYLNGVDVKDGEIVVLENVRVNKGEKKNDPELGKKYAALCDVFVMDAFGTAHRAQASTYGVAEFAPIACAGPLLAAELDALGKALKEPARPMVAIVGGSKVSTKLEVLNSLSKIADQIIVGGGIANTFIAAAGHNVGKSLYEADLIPVAKELAANTDIPVPVDVRVGLEFSETAAATEKVVNEVKDDESIFDIGDKSAEQLAEIIKNAKTVLWNGPVGVFEFPHFRKGTEIISHAIANSDAFSIAGGGDTLAAIDLFGIADKISYISTGGGAFLEFVEGKVLPAVEILEKRAKN</sequence>
<proteinExistence type="evidence at protein level"/>
<protein>
    <recommendedName>
        <fullName>Phosphoglycerate kinase</fullName>
        <ecNumber>2.7.2.3</ecNumber>
    </recommendedName>
</protein>
<organism>
    <name type="scientific">Haemophilus influenzae (strain ATCC 51907 / DSM 11121 / KW20 / Rd)</name>
    <dbReference type="NCBI Taxonomy" id="71421"/>
    <lineage>
        <taxon>Bacteria</taxon>
        <taxon>Pseudomonadati</taxon>
        <taxon>Pseudomonadota</taxon>
        <taxon>Gammaproteobacteria</taxon>
        <taxon>Pasteurellales</taxon>
        <taxon>Pasteurellaceae</taxon>
        <taxon>Haemophilus</taxon>
    </lineage>
</organism>
<accession>P43726</accession>
<evidence type="ECO:0000250" key="1"/>
<evidence type="ECO:0000269" key="2">
    <source>
    </source>
</evidence>
<evidence type="ECO:0000305" key="3"/>
<keyword id="KW-0067">ATP-binding</keyword>
<keyword id="KW-0963">Cytoplasm</keyword>
<keyword id="KW-0903">Direct protein sequencing</keyword>
<keyword id="KW-0324">Glycolysis</keyword>
<keyword id="KW-0418">Kinase</keyword>
<keyword id="KW-0547">Nucleotide-binding</keyword>
<keyword id="KW-1185">Reference proteome</keyword>
<keyword id="KW-0808">Transferase</keyword>
<dbReference type="EC" id="2.7.2.3"/>
<dbReference type="EMBL" id="L42023">
    <property type="protein sequence ID" value="AAC22183.1"/>
    <property type="molecule type" value="Genomic_DNA"/>
</dbReference>
<dbReference type="PIR" id="D64074">
    <property type="entry name" value="D64074"/>
</dbReference>
<dbReference type="RefSeq" id="NP_438683.1">
    <property type="nucleotide sequence ID" value="NC_000907.1"/>
</dbReference>
<dbReference type="SMR" id="P43726"/>
<dbReference type="STRING" id="71421.HI_0525"/>
<dbReference type="EnsemblBacteria" id="AAC22183">
    <property type="protein sequence ID" value="AAC22183"/>
    <property type="gene ID" value="HI_0525"/>
</dbReference>
<dbReference type="KEGG" id="hin:HI_0525"/>
<dbReference type="PATRIC" id="fig|71421.8.peg.544"/>
<dbReference type="eggNOG" id="COG0126">
    <property type="taxonomic scope" value="Bacteria"/>
</dbReference>
<dbReference type="HOGENOM" id="CLU_025427_0_2_6"/>
<dbReference type="OrthoDB" id="9808460at2"/>
<dbReference type="PhylomeDB" id="P43726"/>
<dbReference type="BioCyc" id="HINF71421:G1GJ1-538-MONOMER"/>
<dbReference type="UniPathway" id="UPA00109">
    <property type="reaction ID" value="UER00185"/>
</dbReference>
<dbReference type="Proteomes" id="UP000000579">
    <property type="component" value="Chromosome"/>
</dbReference>
<dbReference type="GO" id="GO:0005829">
    <property type="term" value="C:cytosol"/>
    <property type="evidence" value="ECO:0000318"/>
    <property type="project" value="GO_Central"/>
</dbReference>
<dbReference type="GO" id="GO:0043531">
    <property type="term" value="F:ADP binding"/>
    <property type="evidence" value="ECO:0000318"/>
    <property type="project" value="GO_Central"/>
</dbReference>
<dbReference type="GO" id="GO:0005524">
    <property type="term" value="F:ATP binding"/>
    <property type="evidence" value="ECO:0000318"/>
    <property type="project" value="GO_Central"/>
</dbReference>
<dbReference type="GO" id="GO:0004618">
    <property type="term" value="F:phosphoglycerate kinase activity"/>
    <property type="evidence" value="ECO:0000318"/>
    <property type="project" value="GO_Central"/>
</dbReference>
<dbReference type="GO" id="GO:0006094">
    <property type="term" value="P:gluconeogenesis"/>
    <property type="evidence" value="ECO:0000318"/>
    <property type="project" value="GO_Central"/>
</dbReference>
<dbReference type="GO" id="GO:0006096">
    <property type="term" value="P:glycolytic process"/>
    <property type="evidence" value="ECO:0000318"/>
    <property type="project" value="GO_Central"/>
</dbReference>
<dbReference type="FunFam" id="3.40.50.1260:FF:000001">
    <property type="entry name" value="Phosphoglycerate kinase"/>
    <property type="match status" value="1"/>
</dbReference>
<dbReference type="FunFam" id="3.40.50.1260:FF:000002">
    <property type="entry name" value="Phosphoglycerate kinase"/>
    <property type="match status" value="1"/>
</dbReference>
<dbReference type="Gene3D" id="3.40.50.1260">
    <property type="entry name" value="Phosphoglycerate kinase, N-terminal domain"/>
    <property type="match status" value="2"/>
</dbReference>
<dbReference type="HAMAP" id="MF_00145">
    <property type="entry name" value="Phosphoglyc_kinase"/>
    <property type="match status" value="1"/>
</dbReference>
<dbReference type="InterPro" id="IPR001576">
    <property type="entry name" value="Phosphoglycerate_kinase"/>
</dbReference>
<dbReference type="InterPro" id="IPR015911">
    <property type="entry name" value="Phosphoglycerate_kinase_CS"/>
</dbReference>
<dbReference type="InterPro" id="IPR015824">
    <property type="entry name" value="Phosphoglycerate_kinase_N"/>
</dbReference>
<dbReference type="InterPro" id="IPR036043">
    <property type="entry name" value="Phosphoglycerate_kinase_sf"/>
</dbReference>
<dbReference type="PANTHER" id="PTHR11406">
    <property type="entry name" value="PHOSPHOGLYCERATE KINASE"/>
    <property type="match status" value="1"/>
</dbReference>
<dbReference type="PANTHER" id="PTHR11406:SF23">
    <property type="entry name" value="PHOSPHOGLYCERATE KINASE 1, CHLOROPLASTIC-RELATED"/>
    <property type="match status" value="1"/>
</dbReference>
<dbReference type="Pfam" id="PF00162">
    <property type="entry name" value="PGK"/>
    <property type="match status" value="1"/>
</dbReference>
<dbReference type="PIRSF" id="PIRSF000724">
    <property type="entry name" value="Pgk"/>
    <property type="match status" value="1"/>
</dbReference>
<dbReference type="PRINTS" id="PR00477">
    <property type="entry name" value="PHGLYCKINASE"/>
</dbReference>
<dbReference type="SUPFAM" id="SSF53748">
    <property type="entry name" value="Phosphoglycerate kinase"/>
    <property type="match status" value="1"/>
</dbReference>
<dbReference type="PROSITE" id="PS00111">
    <property type="entry name" value="PGLYCERATE_KINASE"/>
    <property type="match status" value="1"/>
</dbReference>